<comment type="alternative products">
    <event type="alternative splicing"/>
    <isoform>
        <id>Q9FWS1-1</id>
        <name>1</name>
        <sequence type="displayed"/>
    </isoform>
    <isoform>
        <id>Q9FWS1-2</id>
        <name>2</name>
        <sequence type="described" ref="VSP_047850"/>
    </isoform>
</comment>
<comment type="miscellaneous">
    <molecule>Isoform 2</molecule>
    <text evidence="4">May be due to a competing acceptor splice site.</text>
</comment>
<name>AUL1_ARATH</name>
<dbReference type="EMBL" id="AC023754">
    <property type="protein sequence ID" value="AAG13076.1"/>
    <property type="molecule type" value="Genomic_DNA"/>
</dbReference>
<dbReference type="EMBL" id="AC025814">
    <property type="protein sequence ID" value="AAG12690.1"/>
    <property type="molecule type" value="Genomic_DNA"/>
</dbReference>
<dbReference type="EMBL" id="CP002684">
    <property type="protein sequence ID" value="AEE35700.1"/>
    <property type="molecule type" value="Genomic_DNA"/>
</dbReference>
<dbReference type="EMBL" id="AJ007450">
    <property type="protein sequence ID" value="CAA07520.1"/>
    <property type="molecule type" value="mRNA"/>
</dbReference>
<dbReference type="PIR" id="F96783">
    <property type="entry name" value="F96783"/>
</dbReference>
<dbReference type="PIR" id="T51618">
    <property type="entry name" value="T51618"/>
</dbReference>
<dbReference type="RefSeq" id="NP_177666.1">
    <molecule id="Q9FWS1-2"/>
    <property type="nucleotide sequence ID" value="NM_106186.2"/>
</dbReference>
<dbReference type="SMR" id="Q9FWS1"/>
<dbReference type="BioGRID" id="29087">
    <property type="interactions" value="1"/>
</dbReference>
<dbReference type="FunCoup" id="Q9FWS1">
    <property type="interactions" value="61"/>
</dbReference>
<dbReference type="STRING" id="3702.Q9FWS1"/>
<dbReference type="GlyGen" id="Q9FWS1">
    <property type="glycosylation" value="1 site"/>
</dbReference>
<dbReference type="iPTMnet" id="Q9FWS1"/>
<dbReference type="PaxDb" id="3702-AT1G75310.1"/>
<dbReference type="PeptideAtlas" id="Q9FWS1"/>
<dbReference type="ProteomicsDB" id="241147">
    <molecule id="Q9FWS1-1"/>
</dbReference>
<dbReference type="EnsemblPlants" id="AT1G75310.1">
    <molecule id="Q9FWS1-2"/>
    <property type="protein sequence ID" value="AT1G75310.1"/>
    <property type="gene ID" value="AT1G75310"/>
</dbReference>
<dbReference type="GeneID" id="843868"/>
<dbReference type="Gramene" id="AT1G75310.1">
    <molecule id="Q9FWS1-2"/>
    <property type="protein sequence ID" value="AT1G75310.1"/>
    <property type="gene ID" value="AT1G75310"/>
</dbReference>
<dbReference type="KEGG" id="ath:AT1G75310"/>
<dbReference type="Araport" id="AT1G75310"/>
<dbReference type="TAIR" id="AT1G75310">
    <property type="gene designation" value="AUL1"/>
</dbReference>
<dbReference type="eggNOG" id="KOG0431">
    <property type="taxonomic scope" value="Eukaryota"/>
</dbReference>
<dbReference type="HOGENOM" id="CLU_004791_0_0_1"/>
<dbReference type="InParanoid" id="Q9FWS1"/>
<dbReference type="PRO" id="PR:Q9FWS1"/>
<dbReference type="Proteomes" id="UP000006548">
    <property type="component" value="Chromosome 1"/>
</dbReference>
<dbReference type="ExpressionAtlas" id="Q9FWS1">
    <property type="expression patterns" value="baseline and differential"/>
</dbReference>
<dbReference type="CDD" id="cd06257">
    <property type="entry name" value="DnaJ"/>
    <property type="match status" value="1"/>
</dbReference>
<dbReference type="FunFam" id="1.10.287.110:FF:000009">
    <property type="entry name" value="Auxilin-related protein 1"/>
    <property type="match status" value="1"/>
</dbReference>
<dbReference type="Gene3D" id="1.10.287.110">
    <property type="entry name" value="DnaJ domain"/>
    <property type="match status" value="1"/>
</dbReference>
<dbReference type="InterPro" id="IPR001623">
    <property type="entry name" value="DnaJ_domain"/>
</dbReference>
<dbReference type="InterPro" id="IPR036869">
    <property type="entry name" value="J_dom_sf"/>
</dbReference>
<dbReference type="PANTHER" id="PTHR23172:SF67">
    <property type="entry name" value="AUXILIN-LIKE PROTEIN 1"/>
    <property type="match status" value="1"/>
</dbReference>
<dbReference type="PANTHER" id="PTHR23172">
    <property type="entry name" value="AUXILIN/CYCLIN G-ASSOCIATED KINASE-RELATED"/>
    <property type="match status" value="1"/>
</dbReference>
<dbReference type="SUPFAM" id="SSF46565">
    <property type="entry name" value="Chaperone J-domain"/>
    <property type="match status" value="1"/>
</dbReference>
<dbReference type="PROSITE" id="PS50076">
    <property type="entry name" value="DNAJ_2"/>
    <property type="match status" value="1"/>
</dbReference>
<proteinExistence type="evidence at transcript level"/>
<keyword id="KW-0025">Alternative splicing</keyword>
<keyword id="KW-0175">Coiled coil</keyword>
<keyword id="KW-1185">Reference proteome</keyword>
<sequence>MEYEKSPTATTFSRKISNNRSHSLSFSANAVYDGVFSSPVNSKSPLVDYGEIFRGSGPSPSSIPFLDVPELNVGKVKVDVRSSKLDYSSVFGGLGACDFAVTPKEVIIKSEKKTSINEDKKRNRRKGGNSSDVPLCNEGKKSPEMVRMKHSDISYHQTVPRNENGATHLTQVPATMPGPIPTQVVDNTSLLHKIESKSTPIPAVEKKLPCNEGREEVKASRKQGSKTEVDFENIFARDGCSTRDDSTCKTVSNGEYRDVKPPSSFQCTLNGEHGASERLSGLNSGPSERYETEDADSPSSPPYFDAETDENSVAAESSAALKKAIEEAQIRMNIAKQMMEKKKSGFRSCAKLKSCDDSKIENKGNTKVEGITEESRDNNSQILGEMVKPSEQSFSNEGDQHAKRARKLWGVPEGLLKSTSDHKPEELEEQDIITLEEEQARRGRKHWELPGGIFKSVMNSKQQEPENLAPAKPEPDTKQEVQPITENPFYTFGQLGSKLKCVVEAFTGSKVSQKDEKQFTEKENSTVTQMVQDEESDSQEMLAGIPVIETYLREVEETPQQTESKSEMNIEEKSESTICAFTERSSQNMEKETGWQVKSACKFEDGSGVKDFQENGDHTCNVLDQEGEKEIVSEPQEMLVGPDDSKTYVREVEETPTPSLNKTQSDDSVGAMVSFNRVNISEPGNIDEVQEAVHKVPRRRRVWKTSEDVYNMIKAPKGNNRPWQLESAENETTAMSFHEEGVRIHHASEEIESTSGQASDSGLQENWTVLKQMFRQMFQTADTKGEDETYCLVESERGHLDIHQKAQEKYEQVEVETVRTNYEAYAHTRENEDESAQETYCRKEDGKVEVQGKTSLVRELIGEELEMASLEEEDVQEASEEAGWVQGLSELNEINEHADSHAEMLEYDRSETDSNNSRERFDQTQEQAEETMIDGSIDTDTSRSSFEMRQGDSYIEEVGIEQHRSDQFPEKASAVSNTEEHIEEIDSDSIQSGWSVVEDDDRSLQDGGASQAESKHDELEETKEESDEMKTSLGVERNGDKKELEHQFECQENETYRSNVEAAESSCRFPNGEEIIGAATNGNMKENEGEEGEESCRSSMEEEGDATSDIGAATDGNMKENEGEESCRSSMEEEGDATSDISQNKAETVEEHLKKIDETREKERERKQERVMVERAIREARERAFADAMERAGKTAMEKAKAVAHRREVPRKSEKGSVEVNDKLSSAEKASMQAKLRAERAAVERAITEVRERAMEKALSGKSAASQAKSYGGSKSFSSSGERRGSSSSGTENKSSGPSNSSNQTAKGEPIQRCKARSERHQRTSDRAAEALAEKKLRDLKTQKEQTERNRLAEALDADVKRWSSGKENNLRALISTLQYILGAESGWKPIPLTDLVSSASVRKAYRKATLYVHPDKLQQRGASTQQKYICEKVFDLLKEAWNKFGADER</sequence>
<evidence type="ECO:0000255" key="1"/>
<evidence type="ECO:0000255" key="2">
    <source>
        <dbReference type="PROSITE-ProRule" id="PRU00286"/>
    </source>
</evidence>
<evidence type="ECO:0000256" key="3">
    <source>
        <dbReference type="SAM" id="MobiDB-lite"/>
    </source>
</evidence>
<evidence type="ECO:0000305" key="4"/>
<accession>Q9FWS1</accession>
<accession>F4HZ18</accession>
<accession>O81812</accession>
<accession>Q9FRM2</accession>
<gene>
    <name type="primary">AUL1</name>
    <name type="ordered locus">At1g75310</name>
    <name type="ORF">F1B16.14</name>
    <name type="ORF">F22H5.15</name>
</gene>
<protein>
    <recommendedName>
        <fullName>Auxilin-like protein 1</fullName>
    </recommendedName>
</protein>
<organism>
    <name type="scientific">Arabidopsis thaliana</name>
    <name type="common">Mouse-ear cress</name>
    <dbReference type="NCBI Taxonomy" id="3702"/>
    <lineage>
        <taxon>Eukaryota</taxon>
        <taxon>Viridiplantae</taxon>
        <taxon>Streptophyta</taxon>
        <taxon>Embryophyta</taxon>
        <taxon>Tracheophyta</taxon>
        <taxon>Spermatophyta</taxon>
        <taxon>Magnoliopsida</taxon>
        <taxon>eudicotyledons</taxon>
        <taxon>Gunneridae</taxon>
        <taxon>Pentapetalae</taxon>
        <taxon>rosids</taxon>
        <taxon>malvids</taxon>
        <taxon>Brassicales</taxon>
        <taxon>Brassicaceae</taxon>
        <taxon>Camelineae</taxon>
        <taxon>Arabidopsis</taxon>
    </lineage>
</organism>
<reference key="1">
    <citation type="journal article" date="2000" name="Nature">
        <title>Sequence and analysis of chromosome 1 of the plant Arabidopsis thaliana.</title>
        <authorList>
            <person name="Theologis A."/>
            <person name="Ecker J.R."/>
            <person name="Palm C.J."/>
            <person name="Federspiel N.A."/>
            <person name="Kaul S."/>
            <person name="White O."/>
            <person name="Alonso J."/>
            <person name="Altafi H."/>
            <person name="Araujo R."/>
            <person name="Bowman C.L."/>
            <person name="Brooks S.Y."/>
            <person name="Buehler E."/>
            <person name="Chan A."/>
            <person name="Chao Q."/>
            <person name="Chen H."/>
            <person name="Cheuk R.F."/>
            <person name="Chin C.W."/>
            <person name="Chung M.K."/>
            <person name="Conn L."/>
            <person name="Conway A.B."/>
            <person name="Conway A.R."/>
            <person name="Creasy T.H."/>
            <person name="Dewar K."/>
            <person name="Dunn P."/>
            <person name="Etgu P."/>
            <person name="Feldblyum T.V."/>
            <person name="Feng J.-D."/>
            <person name="Fong B."/>
            <person name="Fujii C.Y."/>
            <person name="Gill J.E."/>
            <person name="Goldsmith A.D."/>
            <person name="Haas B."/>
            <person name="Hansen N.F."/>
            <person name="Hughes B."/>
            <person name="Huizar L."/>
            <person name="Hunter J.L."/>
            <person name="Jenkins J."/>
            <person name="Johnson-Hopson C."/>
            <person name="Khan S."/>
            <person name="Khaykin E."/>
            <person name="Kim C.J."/>
            <person name="Koo H.L."/>
            <person name="Kremenetskaia I."/>
            <person name="Kurtz D.B."/>
            <person name="Kwan A."/>
            <person name="Lam B."/>
            <person name="Langin-Hooper S."/>
            <person name="Lee A."/>
            <person name="Lee J.M."/>
            <person name="Lenz C.A."/>
            <person name="Li J.H."/>
            <person name="Li Y.-P."/>
            <person name="Lin X."/>
            <person name="Liu S.X."/>
            <person name="Liu Z.A."/>
            <person name="Luros J.S."/>
            <person name="Maiti R."/>
            <person name="Marziali A."/>
            <person name="Militscher J."/>
            <person name="Miranda M."/>
            <person name="Nguyen M."/>
            <person name="Nierman W.C."/>
            <person name="Osborne B.I."/>
            <person name="Pai G."/>
            <person name="Peterson J."/>
            <person name="Pham P.K."/>
            <person name="Rizzo M."/>
            <person name="Rooney T."/>
            <person name="Rowley D."/>
            <person name="Sakano H."/>
            <person name="Salzberg S.L."/>
            <person name="Schwartz J.R."/>
            <person name="Shinn P."/>
            <person name="Southwick A.M."/>
            <person name="Sun H."/>
            <person name="Tallon L.J."/>
            <person name="Tambunga G."/>
            <person name="Toriumi M.J."/>
            <person name="Town C.D."/>
            <person name="Utterback T."/>
            <person name="Van Aken S."/>
            <person name="Vaysberg M."/>
            <person name="Vysotskaia V.S."/>
            <person name="Walker M."/>
            <person name="Wu D."/>
            <person name="Yu G."/>
            <person name="Fraser C.M."/>
            <person name="Venter J.C."/>
            <person name="Davis R.W."/>
        </authorList>
    </citation>
    <scope>NUCLEOTIDE SEQUENCE [LARGE SCALE GENOMIC DNA]</scope>
    <source>
        <strain>cv. Columbia</strain>
    </source>
</reference>
<reference key="2">
    <citation type="journal article" date="2017" name="Plant J.">
        <title>Araport11: a complete reannotation of the Arabidopsis thaliana reference genome.</title>
        <authorList>
            <person name="Cheng C.Y."/>
            <person name="Krishnakumar V."/>
            <person name="Chan A.P."/>
            <person name="Thibaud-Nissen F."/>
            <person name="Schobel S."/>
            <person name="Town C.D."/>
        </authorList>
    </citation>
    <scope>GENOME REANNOTATION</scope>
    <source>
        <strain>cv. Columbia</strain>
    </source>
</reference>
<reference key="3">
    <citation type="journal article" date="1999" name="FEBS Lett.">
        <title>OTC and AUL1, two convergent and overlapping genes in the nuclear genome of Arabidopsis thaliana.</title>
        <authorList>
            <person name="Quesada V."/>
            <person name="Ponce M.R."/>
            <person name="Micol J.L."/>
        </authorList>
    </citation>
    <scope>NUCLEOTIDE SEQUENCE [MRNA] OF 1003-1450 (ISOFORM 1)</scope>
    <source>
        <strain>cv. Columbia</strain>
    </source>
</reference>
<feature type="chain" id="PRO_0000423422" description="Auxilin-like protein 1">
    <location>
        <begin position="1"/>
        <end position="1450"/>
    </location>
</feature>
<feature type="domain" description="J" evidence="2">
    <location>
        <begin position="1377"/>
        <end position="1450"/>
    </location>
</feature>
<feature type="region of interest" description="Disordered" evidence="3">
    <location>
        <begin position="117"/>
        <end position="142"/>
    </location>
</feature>
<feature type="region of interest" description="Disordered" evidence="3">
    <location>
        <begin position="241"/>
        <end position="318"/>
    </location>
</feature>
<feature type="region of interest" description="Disordered" evidence="3">
    <location>
        <begin position="357"/>
        <end position="383"/>
    </location>
</feature>
<feature type="region of interest" description="Disordered" evidence="3">
    <location>
        <begin position="459"/>
        <end position="480"/>
    </location>
</feature>
<feature type="region of interest" description="Disordered" evidence="3">
    <location>
        <begin position="512"/>
        <end position="541"/>
    </location>
</feature>
<feature type="region of interest" description="Disordered" evidence="3">
    <location>
        <begin position="556"/>
        <end position="575"/>
    </location>
</feature>
<feature type="region of interest" description="Disordered" evidence="3">
    <location>
        <begin position="908"/>
        <end position="946"/>
    </location>
</feature>
<feature type="region of interest" description="Disordered" evidence="3">
    <location>
        <begin position="961"/>
        <end position="1046"/>
    </location>
</feature>
<feature type="region of interest" description="Disordered" evidence="3">
    <location>
        <begin position="1077"/>
        <end position="1168"/>
    </location>
</feature>
<feature type="region of interest" description="Disordered" evidence="3">
    <location>
        <begin position="1192"/>
        <end position="1241"/>
    </location>
</feature>
<feature type="region of interest" description="Disordered" evidence="3">
    <location>
        <begin position="1254"/>
        <end position="1328"/>
    </location>
</feature>
<feature type="coiled-coil region" evidence="1">
    <location>
        <begin position="316"/>
        <end position="344"/>
    </location>
</feature>
<feature type="coiled-coil region" evidence="1">
    <location>
        <begin position="1142"/>
        <end position="1184"/>
    </location>
</feature>
<feature type="coiled-coil region" evidence="1">
    <location>
        <begin position="1219"/>
        <end position="1257"/>
    </location>
</feature>
<feature type="coiled-coil region" evidence="1">
    <location>
        <begin position="1327"/>
        <end position="1355"/>
    </location>
</feature>
<feature type="compositionally biased region" description="Basic and acidic residues" evidence="3">
    <location>
        <begin position="357"/>
        <end position="366"/>
    </location>
</feature>
<feature type="compositionally biased region" description="Basic and acidic residues" evidence="3">
    <location>
        <begin position="512"/>
        <end position="524"/>
    </location>
</feature>
<feature type="compositionally biased region" description="Basic and acidic residues" evidence="3">
    <location>
        <begin position="564"/>
        <end position="575"/>
    </location>
</feature>
<feature type="compositionally biased region" description="Basic and acidic residues" evidence="3">
    <location>
        <begin position="908"/>
        <end position="923"/>
    </location>
</feature>
<feature type="compositionally biased region" description="Basic and acidic residues" evidence="3">
    <location>
        <begin position="1037"/>
        <end position="1046"/>
    </location>
</feature>
<feature type="compositionally biased region" description="Basic and acidic residues" evidence="3">
    <location>
        <begin position="1117"/>
        <end position="1131"/>
    </location>
</feature>
<feature type="compositionally biased region" description="Basic and acidic residues" evidence="3">
    <location>
        <begin position="1147"/>
        <end position="1168"/>
    </location>
</feature>
<feature type="compositionally biased region" description="Basic and acidic residues" evidence="3">
    <location>
        <begin position="1192"/>
        <end position="1226"/>
    </location>
</feature>
<feature type="compositionally biased region" description="Low complexity" evidence="3">
    <location>
        <begin position="1270"/>
        <end position="1299"/>
    </location>
</feature>
<feature type="compositionally biased region" description="Basic and acidic residues" evidence="3">
    <location>
        <begin position="1310"/>
        <end position="1328"/>
    </location>
</feature>
<feature type="splice variant" id="VSP_047850" description="In isoform 2." evidence="4">
    <location>
        <begin position="1306"/>
        <end position="1307"/>
    </location>
</feature>
<feature type="sequence conflict" description="In Ref. 3; CAA07520." evidence="4" ref="3">
    <original>A</original>
    <variation>V</variation>
    <location>
        <position position="1447"/>
    </location>
</feature>